<accession>Q4QFL5</accession>
<comment type="function">
    <text evidence="1">Bifunctional enzyme that catalyzes the epimerization of the S- and R-forms of NAD(P)HX and the dehydration of the S-form of NAD(P)HX at the expense of ADP, which is converted to AMP. This allows the repair of both epimers of NAD(P)HX, a damaged form of NAD(P)H that is a result of enzymatic or heat-dependent hydration (By similarity).</text>
</comment>
<comment type="catalytic activity">
    <reaction>
        <text>(6S)-NADHX + ADP = AMP + phosphate + NADH + H(+)</text>
        <dbReference type="Rhea" id="RHEA:32223"/>
        <dbReference type="ChEBI" id="CHEBI:15378"/>
        <dbReference type="ChEBI" id="CHEBI:43474"/>
        <dbReference type="ChEBI" id="CHEBI:57945"/>
        <dbReference type="ChEBI" id="CHEBI:64074"/>
        <dbReference type="ChEBI" id="CHEBI:456215"/>
        <dbReference type="ChEBI" id="CHEBI:456216"/>
        <dbReference type="EC" id="4.2.1.136"/>
    </reaction>
</comment>
<comment type="catalytic activity">
    <reaction>
        <text>(6S)-NADPHX + ADP = AMP + phosphate + NADPH + H(+)</text>
        <dbReference type="Rhea" id="RHEA:32235"/>
        <dbReference type="ChEBI" id="CHEBI:15378"/>
        <dbReference type="ChEBI" id="CHEBI:43474"/>
        <dbReference type="ChEBI" id="CHEBI:57783"/>
        <dbReference type="ChEBI" id="CHEBI:64076"/>
        <dbReference type="ChEBI" id="CHEBI:456215"/>
        <dbReference type="ChEBI" id="CHEBI:456216"/>
        <dbReference type="EC" id="4.2.1.136"/>
    </reaction>
</comment>
<comment type="catalytic activity">
    <reaction>
        <text>(6R)-NADHX = (6S)-NADHX</text>
        <dbReference type="Rhea" id="RHEA:32215"/>
        <dbReference type="ChEBI" id="CHEBI:64074"/>
        <dbReference type="ChEBI" id="CHEBI:64075"/>
        <dbReference type="EC" id="5.1.99.6"/>
    </reaction>
</comment>
<comment type="catalytic activity">
    <reaction>
        <text>(6R)-NADPHX = (6S)-NADPHX</text>
        <dbReference type="Rhea" id="RHEA:32227"/>
        <dbReference type="ChEBI" id="CHEBI:64076"/>
        <dbReference type="ChEBI" id="CHEBI:64077"/>
        <dbReference type="EC" id="5.1.99.6"/>
    </reaction>
</comment>
<comment type="cofactor">
    <cofactor evidence="1">
        <name>K(+)</name>
        <dbReference type="ChEBI" id="CHEBI:29103"/>
    </cofactor>
    <text evidence="1">Binds 1 potassium ion per subunit.</text>
</comment>
<comment type="similarity">
    <text evidence="2">In the N-terminal section; belongs to the NnrE/AIBP family.</text>
</comment>
<comment type="similarity">
    <text evidence="2">In the C-terminal section; belongs to the NnrD/CARKD family.</text>
</comment>
<name>NNR_LEIMA</name>
<dbReference type="EC" id="4.2.1.136"/>
<dbReference type="EC" id="5.1.99.6"/>
<dbReference type="EMBL" id="FR796410">
    <property type="protein sequence ID" value="CAJ03189.1"/>
    <property type="molecule type" value="Genomic_DNA"/>
</dbReference>
<dbReference type="RefSeq" id="XP_001687719.1">
    <property type="nucleotide sequence ID" value="XM_001687667.1"/>
</dbReference>
<dbReference type="SMR" id="Q4QFL5"/>
<dbReference type="STRING" id="5664.Q4QFL5"/>
<dbReference type="EnsemblProtists" id="CAJ03189">
    <property type="protein sequence ID" value="CAJ03189"/>
    <property type="gene ID" value="LMJF_14_1190"/>
</dbReference>
<dbReference type="GeneID" id="5650323"/>
<dbReference type="KEGG" id="lma:LMJF_14_1190"/>
<dbReference type="VEuPathDB" id="TriTrypDB:LmjF.14.1190"/>
<dbReference type="VEuPathDB" id="TriTrypDB:LMJFC_140019700"/>
<dbReference type="VEuPathDB" id="TriTrypDB:LMJLV39_140019700"/>
<dbReference type="VEuPathDB" id="TriTrypDB:LMJSD75_140019200"/>
<dbReference type="eggNOG" id="KOG2585">
    <property type="taxonomic scope" value="Eukaryota"/>
</dbReference>
<dbReference type="eggNOG" id="KOG3974">
    <property type="taxonomic scope" value="Eukaryota"/>
</dbReference>
<dbReference type="HOGENOM" id="CLU_024853_4_3_1"/>
<dbReference type="InParanoid" id="Q4QFL5"/>
<dbReference type="OMA" id="NAHKGDY"/>
<dbReference type="Proteomes" id="UP000000542">
    <property type="component" value="Chromosome 14"/>
</dbReference>
<dbReference type="GO" id="GO:0052855">
    <property type="term" value="F:ADP-dependent NAD(P)H-hydrate dehydratase activity"/>
    <property type="evidence" value="ECO:0000247"/>
    <property type="project" value="GeneDB"/>
</dbReference>
<dbReference type="GO" id="GO:0005524">
    <property type="term" value="F:ATP binding"/>
    <property type="evidence" value="ECO:0007669"/>
    <property type="project" value="UniProtKB-KW"/>
</dbReference>
<dbReference type="GO" id="GO:0047453">
    <property type="term" value="F:ATP-dependent NAD(P)H-hydrate dehydratase activity"/>
    <property type="evidence" value="ECO:0007669"/>
    <property type="project" value="UniProtKB-UniRule"/>
</dbReference>
<dbReference type="GO" id="GO:0046872">
    <property type="term" value="F:metal ion binding"/>
    <property type="evidence" value="ECO:0007669"/>
    <property type="project" value="UniProtKB-KW"/>
</dbReference>
<dbReference type="GO" id="GO:0052856">
    <property type="term" value="F:NAD(P)HX epimerase activity"/>
    <property type="evidence" value="ECO:0000247"/>
    <property type="project" value="GeneDB"/>
</dbReference>
<dbReference type="GO" id="GO:0110051">
    <property type="term" value="P:metabolite repair"/>
    <property type="evidence" value="ECO:0000318"/>
    <property type="project" value="GO_Central"/>
</dbReference>
<dbReference type="GO" id="GO:0046496">
    <property type="term" value="P:nicotinamide nucleotide metabolic process"/>
    <property type="evidence" value="ECO:0007669"/>
    <property type="project" value="UniProtKB-UniRule"/>
</dbReference>
<dbReference type="CDD" id="cd01171">
    <property type="entry name" value="YXKO-related"/>
    <property type="match status" value="1"/>
</dbReference>
<dbReference type="FunFam" id="3.40.1190.20:FF:000017">
    <property type="entry name" value="Multifunctional fusion protein"/>
    <property type="match status" value="1"/>
</dbReference>
<dbReference type="FunFam" id="3.40.50.10260:FF:000003">
    <property type="entry name" value="Multifunctional fusion protein"/>
    <property type="match status" value="1"/>
</dbReference>
<dbReference type="Gene3D" id="3.40.1190.20">
    <property type="match status" value="1"/>
</dbReference>
<dbReference type="Gene3D" id="3.40.50.10260">
    <property type="entry name" value="YjeF N-terminal domain"/>
    <property type="match status" value="1"/>
</dbReference>
<dbReference type="HAMAP" id="MF_01965">
    <property type="entry name" value="NADHX_dehydratase"/>
    <property type="match status" value="1"/>
</dbReference>
<dbReference type="HAMAP" id="MF_01966">
    <property type="entry name" value="NADHX_epimerase"/>
    <property type="match status" value="1"/>
</dbReference>
<dbReference type="InterPro" id="IPR017953">
    <property type="entry name" value="Carbohydrate_kinase_pred_CS"/>
</dbReference>
<dbReference type="InterPro" id="IPR000631">
    <property type="entry name" value="CARKD"/>
</dbReference>
<dbReference type="InterPro" id="IPR030677">
    <property type="entry name" value="Nnr"/>
</dbReference>
<dbReference type="InterPro" id="IPR029056">
    <property type="entry name" value="Ribokinase-like"/>
</dbReference>
<dbReference type="InterPro" id="IPR004443">
    <property type="entry name" value="YjeF_N_dom"/>
</dbReference>
<dbReference type="InterPro" id="IPR036652">
    <property type="entry name" value="YjeF_N_dom_sf"/>
</dbReference>
<dbReference type="NCBIfam" id="TIGR00196">
    <property type="entry name" value="yjeF_cterm"/>
    <property type="match status" value="1"/>
</dbReference>
<dbReference type="NCBIfam" id="TIGR00197">
    <property type="entry name" value="yjeF_nterm"/>
    <property type="match status" value="1"/>
</dbReference>
<dbReference type="PANTHER" id="PTHR12592:SF0">
    <property type="entry name" value="ATP-DEPENDENT (S)-NAD(P)H-HYDRATE DEHYDRATASE"/>
    <property type="match status" value="1"/>
</dbReference>
<dbReference type="PANTHER" id="PTHR12592">
    <property type="entry name" value="ATP-DEPENDENT (S)-NAD(P)H-HYDRATE DEHYDRATASE FAMILY MEMBER"/>
    <property type="match status" value="1"/>
</dbReference>
<dbReference type="Pfam" id="PF01256">
    <property type="entry name" value="Carb_kinase"/>
    <property type="match status" value="1"/>
</dbReference>
<dbReference type="Pfam" id="PF03853">
    <property type="entry name" value="YjeF_N"/>
    <property type="match status" value="1"/>
</dbReference>
<dbReference type="PIRSF" id="PIRSF017184">
    <property type="entry name" value="Nnr"/>
    <property type="match status" value="1"/>
</dbReference>
<dbReference type="SUPFAM" id="SSF53613">
    <property type="entry name" value="Ribokinase-like"/>
    <property type="match status" value="1"/>
</dbReference>
<dbReference type="SUPFAM" id="SSF64153">
    <property type="entry name" value="YjeF N-terminal domain-like"/>
    <property type="match status" value="1"/>
</dbReference>
<dbReference type="PROSITE" id="PS01050">
    <property type="entry name" value="YJEF_C_2"/>
    <property type="match status" value="1"/>
</dbReference>
<dbReference type="PROSITE" id="PS51383">
    <property type="entry name" value="YJEF_C_3"/>
    <property type="match status" value="1"/>
</dbReference>
<dbReference type="PROSITE" id="PS51385">
    <property type="entry name" value="YJEF_N"/>
    <property type="match status" value="1"/>
</dbReference>
<evidence type="ECO:0000250" key="1"/>
<evidence type="ECO:0000305" key="2"/>
<sequence length="560" mass="58434">MLSRLSERCTIATGLEQVLRHYVWSAAWLRDAEPAAAASENIDLSGLMERAGRAAYDVFANLYTSQKHWLILVGSGNNGGDGYVIARHAREAGKIVTVLRMPHSKPLPTEAASAQHAWKAVGGTESTMSPGAPLQLPADVDLIVDGLLGTGICGPPREQYADVIRHINGLPVPRVAIDIPSGLNAETGEAAGACVKADHTATFICLKPGLLTGQAKDYVGQLHYRSLGLEDWMTAPERMRVALCRRVALDDVYEYFGIRRSALAHKGSCGKAILVGGDHGFGGAALMSAEACVTVGAGLTRVLTRPEYAAPLLTRCPEAMVTAVETDTGEQLKQQMLEAFEWASTLAVGPGLGTGAYGQAALTAALRHAELHQDKTLVLDADALNLLAGCLHGREGGAAAGARKHLPVLPNSIITPHPGEAARLLDCRVADVEKDRLAAARRLAAILGGTCLLKGPGTIVHCHSSAKTAIVDAGNAGMASGGMGDVLTGLLAGLAAQRMHDTFDTTCAGALVHGVAADMVAAEDGRGTRGIRATELIHRVPLIVNASGPSPASRQRPSGQ</sequence>
<gene>
    <name type="ORF">LMJF_14_1190</name>
</gene>
<protein>
    <recommendedName>
        <fullName>Bifunctional NAD(P)H-hydrate repair enzyme</fullName>
    </recommendedName>
    <alternativeName>
        <fullName>Nicotinamide nucleotide repair protein</fullName>
    </alternativeName>
    <domain>
        <recommendedName>
            <fullName>ADP-dependent (S)-NAD(P)H-hydrate dehydratase</fullName>
            <ecNumber>4.2.1.136</ecNumber>
        </recommendedName>
        <alternativeName>
            <fullName>ADP-dependent NAD(P)HX dehydratase</fullName>
        </alternativeName>
    </domain>
    <domain>
        <recommendedName>
            <fullName>NAD(P)H-hydrate epimerase</fullName>
            <ecNumber>5.1.99.6</ecNumber>
        </recommendedName>
        <alternativeName>
            <fullName>NAD(P)HX epimerase</fullName>
        </alternativeName>
    </domain>
</protein>
<keyword id="KW-0067">ATP-binding</keyword>
<keyword id="KW-0413">Isomerase</keyword>
<keyword id="KW-0456">Lyase</keyword>
<keyword id="KW-0479">Metal-binding</keyword>
<keyword id="KW-0511">Multifunctional enzyme</keyword>
<keyword id="KW-0520">NAD</keyword>
<keyword id="KW-0521">NADP</keyword>
<keyword id="KW-0547">Nucleotide-binding</keyword>
<keyword id="KW-0630">Potassium</keyword>
<keyword id="KW-1185">Reference proteome</keyword>
<proteinExistence type="inferred from homology"/>
<organism>
    <name type="scientific">Leishmania major</name>
    <dbReference type="NCBI Taxonomy" id="5664"/>
    <lineage>
        <taxon>Eukaryota</taxon>
        <taxon>Discoba</taxon>
        <taxon>Euglenozoa</taxon>
        <taxon>Kinetoplastea</taxon>
        <taxon>Metakinetoplastina</taxon>
        <taxon>Trypanosomatida</taxon>
        <taxon>Trypanosomatidae</taxon>
        <taxon>Leishmaniinae</taxon>
        <taxon>Leishmania</taxon>
    </lineage>
</organism>
<feature type="chain" id="PRO_0000416435" description="Bifunctional NAD(P)H-hydrate repair enzyme">
    <location>
        <begin position="1"/>
        <end position="560"/>
    </location>
</feature>
<feature type="domain" description="YjeF N-terminal">
    <location>
        <begin position="29"/>
        <end position="235"/>
    </location>
</feature>
<feature type="domain" description="YjeF C-terminal">
    <location>
        <begin position="249"/>
        <end position="547"/>
    </location>
</feature>
<feature type="region of interest" description="NAD(P)H-hydrate epimerase" evidence="1">
    <location>
        <begin position="1"/>
        <end position="241"/>
    </location>
</feature>
<feature type="region of interest" description="NADPHX 1; for epimerase activity" evidence="1">
    <location>
        <begin position="77"/>
        <end position="81"/>
    </location>
</feature>
<feature type="region of interest" description="NADPHX 1; for epimerase activity" evidence="1">
    <location>
        <begin position="149"/>
        <end position="155"/>
    </location>
</feature>
<feature type="region of interest" description="ADP-dependent (S)-NAD(P)H-hydrate dehydratase" evidence="1">
    <location>
        <begin position="249"/>
        <end position="560"/>
    </location>
</feature>
<feature type="region of interest" description="NADPHX 2; for dehydratase activity" evidence="1">
    <location>
        <begin position="417"/>
        <end position="423"/>
    </location>
</feature>
<feature type="binding site" evidence="1">
    <location>
        <position position="78"/>
    </location>
    <ligand>
        <name>K(+)</name>
        <dbReference type="ChEBI" id="CHEBI:29103"/>
    </ligand>
</feature>
<feature type="binding site" evidence="1">
    <location>
        <position position="145"/>
    </location>
    <ligand>
        <name>K(+)</name>
        <dbReference type="ChEBI" id="CHEBI:29103"/>
    </ligand>
</feature>
<feature type="binding site" evidence="1">
    <location>
        <position position="160"/>
    </location>
    <ligand>
        <name>(6S)-NADPHX</name>
        <dbReference type="ChEBI" id="CHEBI:64076"/>
        <label>1</label>
        <note>for epimerase activity</note>
    </ligand>
</feature>
<feature type="binding site" evidence="1">
    <location>
        <position position="178"/>
    </location>
    <ligand>
        <name>(6S)-NADPHX</name>
        <dbReference type="ChEBI" id="CHEBI:64076"/>
        <label>1</label>
        <note>for epimerase activity</note>
    </ligand>
</feature>
<feature type="binding site" evidence="1">
    <location>
        <position position="181"/>
    </location>
    <ligand>
        <name>K(+)</name>
        <dbReference type="ChEBI" id="CHEBI:29103"/>
    </ligand>
</feature>
<feature type="binding site" evidence="1">
    <location>
        <position position="351"/>
    </location>
    <ligand>
        <name>(6S)-NADPHX</name>
        <dbReference type="ChEBI" id="CHEBI:64076"/>
        <label>2</label>
        <note>for dehydratase activity</note>
    </ligand>
</feature>
<feature type="binding site" evidence="1">
    <location>
        <begin position="454"/>
        <end position="458"/>
    </location>
    <ligand>
        <name>ADP</name>
        <dbReference type="ChEBI" id="CHEBI:456216"/>
    </ligand>
</feature>
<feature type="binding site" evidence="1">
    <location>
        <begin position="475"/>
        <end position="484"/>
    </location>
    <ligand>
        <name>ADP</name>
        <dbReference type="ChEBI" id="CHEBI:456216"/>
    </ligand>
</feature>
<feature type="binding site" evidence="1">
    <location>
        <position position="485"/>
    </location>
    <ligand>
        <name>(6S)-NADPHX</name>
        <dbReference type="ChEBI" id="CHEBI:64076"/>
        <label>2</label>
        <note>for dehydratase activity</note>
    </ligand>
</feature>
<reference key="1">
    <citation type="journal article" date="2005" name="Science">
        <title>The genome of the kinetoplastid parasite, Leishmania major.</title>
        <authorList>
            <person name="Ivens A.C."/>
            <person name="Peacock C.S."/>
            <person name="Worthey E.A."/>
            <person name="Murphy L."/>
            <person name="Aggarwal G."/>
            <person name="Berriman M."/>
            <person name="Sisk E."/>
            <person name="Rajandream M.A."/>
            <person name="Adlem E."/>
            <person name="Aert R."/>
            <person name="Anupama A."/>
            <person name="Apostolou Z."/>
            <person name="Attipoe P."/>
            <person name="Bason N."/>
            <person name="Bauser C."/>
            <person name="Beck A."/>
            <person name="Beverley S.M."/>
            <person name="Bianchettin G."/>
            <person name="Borzym K."/>
            <person name="Bothe G."/>
            <person name="Bruschi C.V."/>
            <person name="Collins M."/>
            <person name="Cadag E."/>
            <person name="Ciarloni L."/>
            <person name="Clayton C."/>
            <person name="Coulson R.M.R."/>
            <person name="Cronin A."/>
            <person name="Cruz A.K."/>
            <person name="Davies R.M."/>
            <person name="De Gaudenzi J."/>
            <person name="Dobson D.E."/>
            <person name="Duesterhoeft A."/>
            <person name="Fazelina G."/>
            <person name="Fosker N."/>
            <person name="Frasch A.C."/>
            <person name="Fraser A."/>
            <person name="Fuchs M."/>
            <person name="Gabel C."/>
            <person name="Goble A."/>
            <person name="Goffeau A."/>
            <person name="Harris D."/>
            <person name="Hertz-Fowler C."/>
            <person name="Hilbert H."/>
            <person name="Horn D."/>
            <person name="Huang Y."/>
            <person name="Klages S."/>
            <person name="Knights A."/>
            <person name="Kube M."/>
            <person name="Larke N."/>
            <person name="Litvin L."/>
            <person name="Lord A."/>
            <person name="Louie T."/>
            <person name="Marra M."/>
            <person name="Masuy D."/>
            <person name="Matthews K."/>
            <person name="Michaeli S."/>
            <person name="Mottram J.C."/>
            <person name="Mueller-Auer S."/>
            <person name="Munden H."/>
            <person name="Nelson S."/>
            <person name="Norbertczak H."/>
            <person name="Oliver K."/>
            <person name="O'neil S."/>
            <person name="Pentony M."/>
            <person name="Pohl T.M."/>
            <person name="Price C."/>
            <person name="Purnelle B."/>
            <person name="Quail M.A."/>
            <person name="Rabbinowitsch E."/>
            <person name="Reinhardt R."/>
            <person name="Rieger M."/>
            <person name="Rinta J."/>
            <person name="Robben J."/>
            <person name="Robertson L."/>
            <person name="Ruiz J.C."/>
            <person name="Rutter S."/>
            <person name="Saunders D."/>
            <person name="Schaefer M."/>
            <person name="Schein J."/>
            <person name="Schwartz D.C."/>
            <person name="Seeger K."/>
            <person name="Seyler A."/>
            <person name="Sharp S."/>
            <person name="Shin H."/>
            <person name="Sivam D."/>
            <person name="Squares R."/>
            <person name="Squares S."/>
            <person name="Tosato V."/>
            <person name="Vogt C."/>
            <person name="Volckaert G."/>
            <person name="Wambutt R."/>
            <person name="Warren T."/>
            <person name="Wedler H."/>
            <person name="Woodward J."/>
            <person name="Zhou S."/>
            <person name="Zimmermann W."/>
            <person name="Smith D.F."/>
            <person name="Blackwell J.M."/>
            <person name="Stuart K.D."/>
            <person name="Barrell B.G."/>
            <person name="Myler P.J."/>
        </authorList>
    </citation>
    <scope>NUCLEOTIDE SEQUENCE [LARGE SCALE GENOMIC DNA]</scope>
    <source>
        <strain>MHOM/IL/81/Friedlin</strain>
    </source>
</reference>